<protein>
    <recommendedName>
        <fullName evidence="1">Chaperone protein HtpG</fullName>
    </recommendedName>
    <alternativeName>
        <fullName evidence="1">Heat shock protein HtpG</fullName>
    </alternativeName>
    <alternativeName>
        <fullName evidence="1">High temperature protein G</fullName>
    </alternativeName>
</protein>
<proteinExistence type="inferred from homology"/>
<dbReference type="EMBL" id="CP000848">
    <property type="protein sequence ID" value="ABV76870.1"/>
    <property type="molecule type" value="Genomic_DNA"/>
</dbReference>
<dbReference type="RefSeq" id="WP_012151409.1">
    <property type="nucleotide sequence ID" value="NZ_CP121767.1"/>
</dbReference>
<dbReference type="SMR" id="A8GTZ5"/>
<dbReference type="GeneID" id="79937902"/>
<dbReference type="KEGG" id="rri:A1G_07145"/>
<dbReference type="HOGENOM" id="CLU_006684_3_0_5"/>
<dbReference type="Proteomes" id="UP000006832">
    <property type="component" value="Chromosome"/>
</dbReference>
<dbReference type="GO" id="GO:0005737">
    <property type="term" value="C:cytoplasm"/>
    <property type="evidence" value="ECO:0007669"/>
    <property type="project" value="UniProtKB-SubCell"/>
</dbReference>
<dbReference type="GO" id="GO:0005524">
    <property type="term" value="F:ATP binding"/>
    <property type="evidence" value="ECO:0007669"/>
    <property type="project" value="UniProtKB-UniRule"/>
</dbReference>
<dbReference type="GO" id="GO:0016887">
    <property type="term" value="F:ATP hydrolysis activity"/>
    <property type="evidence" value="ECO:0007669"/>
    <property type="project" value="InterPro"/>
</dbReference>
<dbReference type="GO" id="GO:0140662">
    <property type="term" value="F:ATP-dependent protein folding chaperone"/>
    <property type="evidence" value="ECO:0007669"/>
    <property type="project" value="InterPro"/>
</dbReference>
<dbReference type="GO" id="GO:0051082">
    <property type="term" value="F:unfolded protein binding"/>
    <property type="evidence" value="ECO:0007669"/>
    <property type="project" value="UniProtKB-UniRule"/>
</dbReference>
<dbReference type="CDD" id="cd16927">
    <property type="entry name" value="HATPase_Hsp90-like"/>
    <property type="match status" value="1"/>
</dbReference>
<dbReference type="FunFam" id="3.30.565.10:FF:000009">
    <property type="entry name" value="Molecular chaperone HtpG"/>
    <property type="match status" value="1"/>
</dbReference>
<dbReference type="Gene3D" id="3.30.230.80">
    <property type="match status" value="1"/>
</dbReference>
<dbReference type="Gene3D" id="3.40.50.11260">
    <property type="match status" value="1"/>
</dbReference>
<dbReference type="Gene3D" id="1.20.120.790">
    <property type="entry name" value="Heat shock protein 90, C-terminal domain"/>
    <property type="match status" value="1"/>
</dbReference>
<dbReference type="Gene3D" id="3.30.565.10">
    <property type="entry name" value="Histidine kinase-like ATPase, C-terminal domain"/>
    <property type="match status" value="1"/>
</dbReference>
<dbReference type="HAMAP" id="MF_00505">
    <property type="entry name" value="HSP90"/>
    <property type="match status" value="1"/>
</dbReference>
<dbReference type="InterPro" id="IPR036890">
    <property type="entry name" value="HATPase_C_sf"/>
</dbReference>
<dbReference type="InterPro" id="IPR019805">
    <property type="entry name" value="Heat_shock_protein_90_CS"/>
</dbReference>
<dbReference type="InterPro" id="IPR037196">
    <property type="entry name" value="HSP90_C"/>
</dbReference>
<dbReference type="InterPro" id="IPR001404">
    <property type="entry name" value="Hsp90_fam"/>
</dbReference>
<dbReference type="InterPro" id="IPR020575">
    <property type="entry name" value="Hsp90_N"/>
</dbReference>
<dbReference type="InterPro" id="IPR020568">
    <property type="entry name" value="Ribosomal_Su5_D2-typ_SF"/>
</dbReference>
<dbReference type="NCBIfam" id="NF003555">
    <property type="entry name" value="PRK05218.1"/>
    <property type="match status" value="1"/>
</dbReference>
<dbReference type="PANTHER" id="PTHR11528">
    <property type="entry name" value="HEAT SHOCK PROTEIN 90 FAMILY MEMBER"/>
    <property type="match status" value="1"/>
</dbReference>
<dbReference type="Pfam" id="PF13589">
    <property type="entry name" value="HATPase_c_3"/>
    <property type="match status" value="1"/>
</dbReference>
<dbReference type="Pfam" id="PF00183">
    <property type="entry name" value="HSP90"/>
    <property type="match status" value="1"/>
</dbReference>
<dbReference type="PIRSF" id="PIRSF002583">
    <property type="entry name" value="Hsp90"/>
    <property type="match status" value="1"/>
</dbReference>
<dbReference type="PRINTS" id="PR00775">
    <property type="entry name" value="HEATSHOCK90"/>
</dbReference>
<dbReference type="SMART" id="SM00387">
    <property type="entry name" value="HATPase_c"/>
    <property type="match status" value="1"/>
</dbReference>
<dbReference type="SUPFAM" id="SSF55874">
    <property type="entry name" value="ATPase domain of HSP90 chaperone/DNA topoisomerase II/histidine kinase"/>
    <property type="match status" value="1"/>
</dbReference>
<dbReference type="SUPFAM" id="SSF110942">
    <property type="entry name" value="HSP90 C-terminal domain"/>
    <property type="match status" value="1"/>
</dbReference>
<dbReference type="SUPFAM" id="SSF54211">
    <property type="entry name" value="Ribosomal protein S5 domain 2-like"/>
    <property type="match status" value="1"/>
</dbReference>
<dbReference type="PROSITE" id="PS00298">
    <property type="entry name" value="HSP90"/>
    <property type="match status" value="1"/>
</dbReference>
<accession>A8GTZ5</accession>
<reference key="1">
    <citation type="submission" date="2007-09" db="EMBL/GenBank/DDBJ databases">
        <title>Complete genome sequence of Rickettsia rickettsii.</title>
        <authorList>
            <person name="Madan A."/>
            <person name="Fahey J."/>
            <person name="Helton E."/>
            <person name="Ketteman M."/>
            <person name="Madan A."/>
            <person name="Rodrigues S."/>
            <person name="Sanchez A."/>
            <person name="Dasch G."/>
            <person name="Eremeeva M."/>
        </authorList>
    </citation>
    <scope>NUCLEOTIDE SEQUENCE [LARGE SCALE GENOMIC DNA]</scope>
    <source>
        <strain>Sheila Smith</strain>
    </source>
</reference>
<comment type="function">
    <text evidence="1">Molecular chaperone. Has ATPase activity.</text>
</comment>
<comment type="subunit">
    <text evidence="1">Homodimer.</text>
</comment>
<comment type="subcellular location">
    <subcellularLocation>
        <location evidence="1">Cytoplasm</location>
    </subcellularLocation>
</comment>
<comment type="similarity">
    <text evidence="1">Belongs to the heat shock protein 90 family.</text>
</comment>
<organism>
    <name type="scientific">Rickettsia rickettsii (strain Sheila Smith)</name>
    <dbReference type="NCBI Taxonomy" id="392021"/>
    <lineage>
        <taxon>Bacteria</taxon>
        <taxon>Pseudomonadati</taxon>
        <taxon>Pseudomonadota</taxon>
        <taxon>Alphaproteobacteria</taxon>
        <taxon>Rickettsiales</taxon>
        <taxon>Rickettsiaceae</taxon>
        <taxon>Rickettsieae</taxon>
        <taxon>Rickettsia</taxon>
        <taxon>spotted fever group</taxon>
    </lineage>
</organism>
<evidence type="ECO:0000255" key="1">
    <source>
        <dbReference type="HAMAP-Rule" id="MF_00505"/>
    </source>
</evidence>
<evidence type="ECO:0000256" key="2">
    <source>
        <dbReference type="SAM" id="MobiDB-lite"/>
    </source>
</evidence>
<name>HTPG_RICRS</name>
<keyword id="KW-0067">ATP-binding</keyword>
<keyword id="KW-0143">Chaperone</keyword>
<keyword id="KW-0963">Cytoplasm</keyword>
<keyword id="KW-0547">Nucleotide-binding</keyword>
<keyword id="KW-0346">Stress response</keyword>
<gene>
    <name evidence="1" type="primary">htpG</name>
    <name type="ordered locus">A1G_07145</name>
</gene>
<feature type="chain" id="PRO_1000014948" description="Chaperone protein HtpG">
    <location>
        <begin position="1"/>
        <end position="621"/>
    </location>
</feature>
<feature type="region of interest" description="A; substrate-binding" evidence="1">
    <location>
        <begin position="1"/>
        <end position="328"/>
    </location>
</feature>
<feature type="region of interest" description="B" evidence="1">
    <location>
        <begin position="329"/>
        <end position="544"/>
    </location>
</feature>
<feature type="region of interest" description="Disordered" evidence="2">
    <location>
        <begin position="475"/>
        <end position="494"/>
    </location>
</feature>
<feature type="region of interest" description="C" evidence="1">
    <location>
        <begin position="545"/>
        <end position="621"/>
    </location>
</feature>
<sequence length="621" mass="70666">MIQEKKKFDAEVGKILNLMIHSLYSNKEIFMRELISNASDACDKLRYLSQSNSELVAGDSNFKITVKVDKDNGQIIIRDNGIGMNKDDLIENLGTIARSGTANFLKSLSGDSKKDNMLIGQFGVGFYSSFMVADKVTVTSRKAGEDKVHIWESDGLGEYTVSDSDKEFTRGTEIILHIKKEEDTFLDHFRLKHIVKSYSDHIAVPIYFFDEAGNNEIQLNSASALWTRPKSEITEEQYKEFYKSLSYAIDDPWITMHNKNEGAIEFTNLLFIPSSKTFDLFHPDRKRRVKLYIKRVFISDENIDLIPSYLRFLRGVVDSEDLPLNISRESLQHNSVLEKIKNAITKRVLGELRKKKEESPEEYNKFWANFGGALKEGLCEATTNHEKLLEVCIFRSALHNKMISLDEYIANFKEGQSTIYYLSGDNPDKLLSSPQIEGLLSKKIDVLLFTDTVDDFWVNVNSKYKEHAIKSATRSDIDVEQTTSQSEAKNTDSKKSDDEYKLLTDYFKETLGELVKEVKISKKLTSSPACLAVSDAAMDIRMERFLIEQKQIANASAKNLELNPKNKIIEKIFNDLKANNKNNEELVNLIFDQACILEGEPVADTGAFSKRLNDIVQKAIL</sequence>